<proteinExistence type="inferred from homology"/>
<protein>
    <recommendedName>
        <fullName>Transposon Ty1-DR1 Gag-Pol polyprotein</fullName>
    </recommendedName>
    <alternativeName>
        <fullName>Gag-Pol-p199</fullName>
    </alternativeName>
    <alternativeName>
        <fullName>TY1A-TY1B</fullName>
    </alternativeName>
    <alternativeName>
        <fullName>Transposon Ty1 TYA-TYB polyprotein</fullName>
    </alternativeName>
    <alternativeName>
        <fullName>p190</fullName>
    </alternativeName>
    <component>
        <recommendedName>
            <fullName>Capsid protein</fullName>
            <shortName>CA</shortName>
        </recommendedName>
        <alternativeName>
            <fullName>Gag-p45</fullName>
        </alternativeName>
        <alternativeName>
            <fullName>p54</fullName>
        </alternativeName>
    </component>
    <component>
        <recommendedName>
            <fullName>Ty1 protease</fullName>
            <shortName>PR</shortName>
            <ecNumber>3.4.23.-</ecNumber>
        </recommendedName>
        <alternativeName>
            <fullName>Pol-p20</fullName>
        </alternativeName>
        <alternativeName>
            <fullName>p23</fullName>
        </alternativeName>
    </component>
    <component>
        <recommendedName>
            <fullName>Integrase</fullName>
            <shortName>IN</shortName>
        </recommendedName>
        <alternativeName>
            <fullName>Pol-p71</fullName>
        </alternativeName>
        <alternativeName>
            <fullName>p84</fullName>
        </alternativeName>
        <alternativeName>
            <fullName>p90</fullName>
        </alternativeName>
    </component>
    <component>
        <recommendedName>
            <fullName>Reverse transcriptase/ribonuclease H</fullName>
            <shortName>RT</shortName>
            <shortName>RT-RH</shortName>
            <ecNumber>2.7.7.49</ecNumber>
            <ecNumber>2.7.7.7</ecNumber>
            <ecNumber>3.1.26.4</ecNumber>
        </recommendedName>
        <alternativeName>
            <fullName>Pol-p63</fullName>
        </alternativeName>
        <alternativeName>
            <fullName>p60</fullName>
        </alternativeName>
    </component>
</protein>
<sequence>MESQQLSNYPHISHGSACASVTSKEVHTNQDPLDVSASKIQEYDKASTKANSQQTTTPASSAVPENPHHASPQPASVPPPQNGPYPQQCMMTQNQANPSGWSFYGHPSMIPYTPYQMSPMYFPPGPQSQFPQYPSSVGTPLSTPSPESGNTFTDSSSADSDMTSTKKYVRPPPMLTSPNDFPNWVKTYIKFLQNSNLGGIIPTVNGKPVRQITDDELTFLYNTFQIFAPSQFLPTWVKDILSVDYTDIMKILSKSIEKMQSDTQEANDIVTLANLQYNGSTPADAFETKVTNIIDRLNNNGIHINNKVACQLIMRGLSGEYKFLRYTRHRHLNMTVAELFLDIHAIYEEQQGSRNSKPNYRRNPSDEKNDSRSYTNTTKPKVIARNPQKTNNSKSKTARAHNVSTSNNSPSTDNDSISKSTTEPIQLNNKHDLHLGQELTESTVNHTNHSDDELPGHLLLDSGASRTLIRSAHHIHSASSNPGINVVDAQKRNIPINAIGDLQFHFQDNTKTSIKVLHTPNIAYDLLSLNELAAVDITACFTKNVLERSDGTVLAPIVKYGDFYWVSKKYLLPSNISVPTINNVHTSESTRKYPYPFIHRMLAHANAQTIRYSLKNNTITYFNESDVDWSSAIDYQCPDCLIGKSTKHRHIKGSRLKYQNSYEPFQYLHTDIFGPVHNLPNSAPSYFISFTDETTKFRWVYPLHDRREDSILDVFTTILAFIKNQFQASVLVIQMDRGSEYTNRTLHKFLEKNGITPCYTTTADSRAHGVAERLNRTLLDDCRTQLQCSGLPNHLWFSAIEFSTIVRNSLASPKSKKSARQHAGLAGLDISTLLPFGQPVIVNDHNPNSKIHPRGIPGYALHPSRNSYGYIIYLPSLKKTVDTTNYVILQGKESRLDQFNYDALTFDEDLNRLTASYHSFIASNEIQESNDLNIESDHDFQSDIELHPEQPRNVLSKAVSPTDSTPPSTHTEDSKRVSKTNIRAPREVDPNISESNILPSKKRSSTPQISNIESTGSGGMHKLNVPLLAPMSQSNTHESSHASKSKDFRHSDSYSENETNHTNVPISSTGGTNNKTVPQISDQETEKRIIHRSPSIDASPPENNSSHNIVPIKTPTTVSEQNTEESIIADLPLPDLPPESPTEFPDPFKELPPINSHQTNSSLGGIGDSNAYTTINSKKRSLEDNETEIKVSRDTWNTKNMRSLEPPRSKKRIHLIAAVKAVKSIKPIRTTLRYDEAITYNKDIKEKEKYIEAYHKEVNQLLKMNTWDTDKYYDRKEIDPKRVINSMFIFNRKRDGTHKARFVARGDIQHPDTYDSGMQSNTVHHYALMTSLSLALDNNYYITQLDISSAYLYADIKEELYIRPPPHLGMNDKLIRLKKSLYGLKQSGANWYETIKSYLIKQCGMEEVRGWSCVFKNSQVTICLFVDDMILFSKDLNANKKIITTLKKQYDTKIINLGEGDNEIQYDILGLEIKYQRSKYMKLGMEKSLTEKLPKLNVPLNPKGKKLRAPGQPGHYIDQDELEIDEDEYKEKVHEMQKLIGLASYVGYKFRFDLLYYINTLAQHILFPSRQVLDMTYELIQFMWDTRDKQLIWHKNKPTKPDNKLVAISDASYGNQPYYKSQIGNIFLLNGKVIGGKSTKASLTCTSTTEAEIHAVSEAIPLLNNLSHLVQELNKKPIIKGSLTDSRSTISIIKSTNEEKFRNRFFGTKAMRLRDEVSGNNLYVYYIETKKNIADVMTKPLPIKTFKLLTNKWIH</sequence>
<gene>
    <name type="primary">TY1B-DR1</name>
    <name type="synonym">YDRCTy1-1 POL</name>
    <name type="ordered locus">YDR098C-B</name>
    <name type="ORF">YD8557.06c</name>
</gene>
<evidence type="ECO:0000250" key="1"/>
<evidence type="ECO:0000250" key="2">
    <source>
        <dbReference type="UniProtKB" id="Q99231"/>
    </source>
</evidence>
<evidence type="ECO:0000255" key="3">
    <source>
        <dbReference type="PROSITE-ProRule" id="PRU00457"/>
    </source>
</evidence>
<evidence type="ECO:0000255" key="4">
    <source>
        <dbReference type="PROSITE-ProRule" id="PRU10094"/>
    </source>
</evidence>
<evidence type="ECO:0000256" key="5">
    <source>
        <dbReference type="SAM" id="MobiDB-lite"/>
    </source>
</evidence>
<evidence type="ECO:0000305" key="6"/>
<feature type="chain" id="PRO_0000279001" description="Transposon Ty1-DR1 Gag-Pol polyprotein">
    <location>
        <begin position="1"/>
        <end position="1755"/>
    </location>
</feature>
<feature type="chain" id="PRO_0000279002" description="Capsid protein" evidence="1">
    <location>
        <begin position="1"/>
        <end position="401"/>
    </location>
</feature>
<feature type="chain" id="PRO_0000279003" description="Ty1 protease" evidence="1">
    <location>
        <begin position="402"/>
        <end position="582"/>
    </location>
</feature>
<feature type="chain" id="PRO_0000279004" description="Integrase" evidence="1">
    <location>
        <begin position="583"/>
        <end position="1217"/>
    </location>
</feature>
<feature type="chain" id="PRO_0000279005" description="Reverse transcriptase/ribonuclease H" evidence="1">
    <location>
        <begin position="1218"/>
        <end position="1755"/>
    </location>
</feature>
<feature type="domain" description="Integrase catalytic" evidence="3">
    <location>
        <begin position="660"/>
        <end position="835"/>
    </location>
</feature>
<feature type="domain" description="Reverse transcriptase Ty1/copia-type">
    <location>
        <begin position="1338"/>
        <end position="1476"/>
    </location>
</feature>
<feature type="domain" description="RNase H Ty1/copia-type">
    <location>
        <begin position="1610"/>
        <end position="1752"/>
    </location>
</feature>
<feature type="region of interest" description="Disordered" evidence="5">
    <location>
        <begin position="1"/>
        <end position="93"/>
    </location>
</feature>
<feature type="region of interest" description="Disordered" evidence="5">
    <location>
        <begin position="126"/>
        <end position="173"/>
    </location>
</feature>
<feature type="region of interest" description="RNA-binding" evidence="1">
    <location>
        <begin position="299"/>
        <end position="401"/>
    </location>
</feature>
<feature type="region of interest" description="Disordered" evidence="5">
    <location>
        <begin position="352"/>
        <end position="421"/>
    </location>
</feature>
<feature type="region of interest" description="Integrase-type zinc finger-like">
    <location>
        <begin position="583"/>
        <end position="640"/>
    </location>
</feature>
<feature type="region of interest" description="Disordered" evidence="5">
    <location>
        <begin position="956"/>
        <end position="1087"/>
    </location>
</feature>
<feature type="region of interest" description="Disordered" evidence="5">
    <location>
        <begin position="1092"/>
        <end position="1111"/>
    </location>
</feature>
<feature type="region of interest" description="Disordered" evidence="5">
    <location>
        <begin position="1130"/>
        <end position="1187"/>
    </location>
</feature>
<feature type="short sequence motif" description="Bipartite nuclear localization signal" evidence="1">
    <location>
        <begin position="1178"/>
        <end position="1212"/>
    </location>
</feature>
<feature type="compositionally biased region" description="Polar residues" evidence="5">
    <location>
        <begin position="1"/>
        <end position="10"/>
    </location>
</feature>
<feature type="compositionally biased region" description="Polar residues" evidence="5">
    <location>
        <begin position="48"/>
        <end position="60"/>
    </location>
</feature>
<feature type="compositionally biased region" description="Polar residues" evidence="5">
    <location>
        <begin position="127"/>
        <end position="152"/>
    </location>
</feature>
<feature type="compositionally biased region" description="Low complexity" evidence="5">
    <location>
        <begin position="153"/>
        <end position="165"/>
    </location>
</feature>
<feature type="compositionally biased region" description="Low complexity" evidence="5">
    <location>
        <begin position="402"/>
        <end position="418"/>
    </location>
</feature>
<feature type="compositionally biased region" description="Low complexity" evidence="5">
    <location>
        <begin position="960"/>
        <end position="969"/>
    </location>
</feature>
<feature type="compositionally biased region" description="Polar residues" evidence="5">
    <location>
        <begin position="1005"/>
        <end position="1015"/>
    </location>
</feature>
<feature type="compositionally biased region" description="Basic and acidic residues" evidence="5">
    <location>
        <begin position="1038"/>
        <end position="1053"/>
    </location>
</feature>
<feature type="compositionally biased region" description="Polar residues" evidence="5">
    <location>
        <begin position="1054"/>
        <end position="1082"/>
    </location>
</feature>
<feature type="compositionally biased region" description="Polar residues" evidence="5">
    <location>
        <begin position="1101"/>
        <end position="1111"/>
    </location>
</feature>
<feature type="active site" description="For protease activity; shared with dimeric partner" evidence="4">
    <location>
        <position position="461"/>
    </location>
</feature>
<feature type="binding site" evidence="3">
    <location>
        <position position="671"/>
    </location>
    <ligand>
        <name>Mg(2+)</name>
        <dbReference type="ChEBI" id="CHEBI:18420"/>
        <label>1</label>
        <note>catalytic; for integrase activity</note>
    </ligand>
</feature>
<feature type="binding site" evidence="3">
    <location>
        <position position="736"/>
    </location>
    <ligand>
        <name>Mg(2+)</name>
        <dbReference type="ChEBI" id="CHEBI:18420"/>
        <label>1</label>
        <note>catalytic; for integrase activity</note>
    </ligand>
</feature>
<feature type="binding site" evidence="3">
    <location>
        <position position="1346"/>
    </location>
    <ligand>
        <name>Mg(2+)</name>
        <dbReference type="ChEBI" id="CHEBI:18420"/>
        <label>2</label>
        <note>catalytic; for reverse transcriptase activity</note>
    </ligand>
</feature>
<feature type="binding site" evidence="3">
    <location>
        <position position="1427"/>
    </location>
    <ligand>
        <name>Mg(2+)</name>
        <dbReference type="ChEBI" id="CHEBI:18420"/>
        <label>2</label>
        <note>catalytic; for reverse transcriptase activity</note>
    </ligand>
</feature>
<feature type="binding site" evidence="3">
    <location>
        <position position="1428"/>
    </location>
    <ligand>
        <name>Mg(2+)</name>
        <dbReference type="ChEBI" id="CHEBI:18420"/>
        <label>2</label>
        <note>catalytic; for reverse transcriptase activity</note>
    </ligand>
</feature>
<feature type="binding site" evidence="3">
    <location>
        <position position="1610"/>
    </location>
    <ligand>
        <name>Mg(2+)</name>
        <dbReference type="ChEBI" id="CHEBI:18420"/>
        <label>3</label>
        <note>catalytic; for RNase H activity</note>
    </ligand>
</feature>
<feature type="binding site" evidence="3">
    <location>
        <position position="1652"/>
    </location>
    <ligand>
        <name>Mg(2+)</name>
        <dbReference type="ChEBI" id="CHEBI:18420"/>
        <label>3</label>
        <note>catalytic; for RNase H activity</note>
    </ligand>
</feature>
<feature type="binding site" evidence="3">
    <location>
        <position position="1685"/>
    </location>
    <ligand>
        <name>Mg(2+)</name>
        <dbReference type="ChEBI" id="CHEBI:18420"/>
        <label>3</label>
        <note>catalytic; for RNase H activity</note>
    </ligand>
</feature>
<feature type="site" description="Cleavage; by Ty1 protease" evidence="1">
    <location>
        <begin position="401"/>
        <end position="402"/>
    </location>
</feature>
<feature type="site" description="Cleavage; by Ty1 protease" evidence="1">
    <location>
        <begin position="582"/>
        <end position="583"/>
    </location>
</feature>
<feature type="site" description="Cleavage; by Ty1 protease" evidence="1">
    <location>
        <begin position="1217"/>
        <end position="1218"/>
    </location>
</feature>
<feature type="modified residue" description="Phosphoserine" evidence="2">
    <location>
        <position position="416"/>
    </location>
</feature>
<dbReference type="EC" id="3.4.23.-"/>
<dbReference type="EC" id="2.7.7.49"/>
<dbReference type="EC" id="2.7.7.7"/>
<dbReference type="EC" id="3.1.26.4"/>
<dbReference type="EMBL" id="Z47746">
    <property type="protein sequence ID" value="CAA87673.1"/>
    <property type="status" value="ALT_SEQ"/>
    <property type="molecule type" value="Genomic_DNA"/>
</dbReference>
<dbReference type="EMBL" id="BK006938">
    <property type="protein sequence ID" value="DAA11944.1"/>
    <property type="molecule type" value="Genomic_DNA"/>
</dbReference>
<dbReference type="PIR" id="S69949">
    <property type="entry name" value="S69949"/>
</dbReference>
<dbReference type="RefSeq" id="NP_058140.1">
    <molecule id="Q03855-1"/>
    <property type="nucleotide sequence ID" value="NM_001184417.2"/>
</dbReference>
<dbReference type="SMR" id="Q03855"/>
<dbReference type="BioGRID" id="32155">
    <property type="interactions" value="4"/>
</dbReference>
<dbReference type="FunCoup" id="Q03855">
    <property type="interactions" value="155"/>
</dbReference>
<dbReference type="IntAct" id="Q03855">
    <property type="interactions" value="1"/>
</dbReference>
<dbReference type="MINT" id="Q03855"/>
<dbReference type="GlyGen" id="Q03855">
    <property type="glycosylation" value="3 sites"/>
</dbReference>
<dbReference type="iPTMnet" id="Q03855"/>
<dbReference type="PaxDb" id="4932-YDR098C-B"/>
<dbReference type="PeptideAtlas" id="Q03855"/>
<dbReference type="GeneID" id="851674"/>
<dbReference type="KEGG" id="sce:YDR098C-B"/>
<dbReference type="AGR" id="SGD:S000007391"/>
<dbReference type="SGD" id="S000007391">
    <property type="gene designation" value="YDR098C-B"/>
</dbReference>
<dbReference type="VEuPathDB" id="FungiDB:YDR098C-B"/>
<dbReference type="eggNOG" id="KOG0017">
    <property type="taxonomic scope" value="Eukaryota"/>
</dbReference>
<dbReference type="HOGENOM" id="CLU_244151_0_0_1"/>
<dbReference type="InParanoid" id="Q03855"/>
<dbReference type="OrthoDB" id="5423336at2759"/>
<dbReference type="Proteomes" id="UP000002311">
    <property type="component" value="Chromosome IV"/>
</dbReference>
<dbReference type="RNAct" id="Q03855">
    <property type="molecule type" value="protein"/>
</dbReference>
<dbReference type="GO" id="GO:0005737">
    <property type="term" value="C:cytoplasm"/>
    <property type="evidence" value="ECO:0007669"/>
    <property type="project" value="UniProtKB-SubCell"/>
</dbReference>
<dbReference type="GO" id="GO:0005634">
    <property type="term" value="C:nucleus"/>
    <property type="evidence" value="ECO:0000314"/>
    <property type="project" value="SGD"/>
</dbReference>
<dbReference type="GO" id="GO:0004190">
    <property type="term" value="F:aspartic-type endopeptidase activity"/>
    <property type="evidence" value="ECO:0007669"/>
    <property type="project" value="UniProtKB-KW"/>
</dbReference>
<dbReference type="GO" id="GO:0005524">
    <property type="term" value="F:ATP binding"/>
    <property type="evidence" value="ECO:0007669"/>
    <property type="project" value="UniProtKB-KW"/>
</dbReference>
<dbReference type="GO" id="GO:0003677">
    <property type="term" value="F:DNA binding"/>
    <property type="evidence" value="ECO:0007669"/>
    <property type="project" value="UniProtKB-KW"/>
</dbReference>
<dbReference type="GO" id="GO:0003887">
    <property type="term" value="F:DNA-directed DNA polymerase activity"/>
    <property type="evidence" value="ECO:0007669"/>
    <property type="project" value="UniProtKB-KW"/>
</dbReference>
<dbReference type="GO" id="GO:0003723">
    <property type="term" value="F:RNA binding"/>
    <property type="evidence" value="ECO:0007669"/>
    <property type="project" value="UniProtKB-KW"/>
</dbReference>
<dbReference type="GO" id="GO:0003964">
    <property type="term" value="F:RNA-directed DNA polymerase activity"/>
    <property type="evidence" value="ECO:0007669"/>
    <property type="project" value="UniProtKB-KW"/>
</dbReference>
<dbReference type="GO" id="GO:0004523">
    <property type="term" value="F:RNA-DNA hybrid ribonuclease activity"/>
    <property type="evidence" value="ECO:0007669"/>
    <property type="project" value="UniProtKB-EC"/>
</dbReference>
<dbReference type="GO" id="GO:0008270">
    <property type="term" value="F:zinc ion binding"/>
    <property type="evidence" value="ECO:0007669"/>
    <property type="project" value="UniProtKB-KW"/>
</dbReference>
<dbReference type="GO" id="GO:0015074">
    <property type="term" value="P:DNA integration"/>
    <property type="evidence" value="ECO:0007669"/>
    <property type="project" value="UniProtKB-KW"/>
</dbReference>
<dbReference type="GO" id="GO:0006310">
    <property type="term" value="P:DNA recombination"/>
    <property type="evidence" value="ECO:0007669"/>
    <property type="project" value="UniProtKB-KW"/>
</dbReference>
<dbReference type="GO" id="GO:0006508">
    <property type="term" value="P:proteolysis"/>
    <property type="evidence" value="ECO:0007669"/>
    <property type="project" value="UniProtKB-KW"/>
</dbReference>
<dbReference type="GO" id="GO:0032196">
    <property type="term" value="P:transposition"/>
    <property type="evidence" value="ECO:0007669"/>
    <property type="project" value="UniProtKB-KW"/>
</dbReference>
<dbReference type="GO" id="GO:0075523">
    <property type="term" value="P:viral translational frameshifting"/>
    <property type="evidence" value="ECO:0007669"/>
    <property type="project" value="UniProtKB-KW"/>
</dbReference>
<dbReference type="CDD" id="cd09272">
    <property type="entry name" value="RNase_HI_RT_Ty1"/>
    <property type="match status" value="1"/>
</dbReference>
<dbReference type="FunFam" id="3.30.420.10:FF:000050">
    <property type="entry name" value="Transposon Ty2-DR3 Gag-Pol polyprotein"/>
    <property type="match status" value="1"/>
</dbReference>
<dbReference type="Gene3D" id="3.30.420.10">
    <property type="entry name" value="Ribonuclease H-like superfamily/Ribonuclease H"/>
    <property type="match status" value="1"/>
</dbReference>
<dbReference type="InterPro" id="IPR001969">
    <property type="entry name" value="Aspartic_peptidase_AS"/>
</dbReference>
<dbReference type="InterPro" id="IPR043502">
    <property type="entry name" value="DNA/RNA_pol_sf"/>
</dbReference>
<dbReference type="InterPro" id="IPR001584">
    <property type="entry name" value="Integrase_cat-core"/>
</dbReference>
<dbReference type="InterPro" id="IPR039537">
    <property type="entry name" value="Retrotran_Ty1/copia-like"/>
</dbReference>
<dbReference type="InterPro" id="IPR012337">
    <property type="entry name" value="RNaseH-like_sf"/>
</dbReference>
<dbReference type="InterPro" id="IPR036397">
    <property type="entry name" value="RNaseH_sf"/>
</dbReference>
<dbReference type="InterPro" id="IPR013103">
    <property type="entry name" value="RVT_2"/>
</dbReference>
<dbReference type="InterPro" id="IPR015820">
    <property type="entry name" value="TYA"/>
</dbReference>
<dbReference type="PANTHER" id="PTHR42648">
    <property type="entry name" value="TRANSPOSASE, PUTATIVE-RELATED"/>
    <property type="match status" value="1"/>
</dbReference>
<dbReference type="PANTHER" id="PTHR42648:SF11">
    <property type="entry name" value="TRANSPOSON TY4-P GAG-POL POLYPROTEIN"/>
    <property type="match status" value="1"/>
</dbReference>
<dbReference type="Pfam" id="PF00665">
    <property type="entry name" value="rve"/>
    <property type="match status" value="1"/>
</dbReference>
<dbReference type="Pfam" id="PF07727">
    <property type="entry name" value="RVT_2"/>
    <property type="match status" value="1"/>
</dbReference>
<dbReference type="Pfam" id="PF01021">
    <property type="entry name" value="TYA"/>
    <property type="match status" value="1"/>
</dbReference>
<dbReference type="SUPFAM" id="SSF56672">
    <property type="entry name" value="DNA/RNA polymerases"/>
    <property type="match status" value="1"/>
</dbReference>
<dbReference type="SUPFAM" id="SSF53098">
    <property type="entry name" value="Ribonuclease H-like"/>
    <property type="match status" value="1"/>
</dbReference>
<dbReference type="PROSITE" id="PS00141">
    <property type="entry name" value="ASP_PROTEASE"/>
    <property type="match status" value="1"/>
</dbReference>
<dbReference type="PROSITE" id="PS50994">
    <property type="entry name" value="INTEGRASE"/>
    <property type="match status" value="1"/>
</dbReference>
<name>YD11B_YEAST</name>
<reference key="1">
    <citation type="journal article" date="1988" name="Mol. Cell. Biol.">
        <title>The Saccharomyces cerevisiae genome contains functional and nonfunctional copies of transposon Ty1.</title>
        <authorList>
            <person name="Boeke J.D."/>
            <person name="Eichinger D."/>
            <person name="Castrillon D."/>
            <person name="Fink G.R."/>
        </authorList>
    </citation>
    <scope>NUCLEOTIDE SEQUENCE [GENOMIC DNA]</scope>
</reference>
<reference key="2">
    <citation type="journal article" date="1997" name="Nature">
        <title>The nucleotide sequence of Saccharomyces cerevisiae chromosome IV.</title>
        <authorList>
            <person name="Jacq C."/>
            <person name="Alt-Moerbe J."/>
            <person name="Andre B."/>
            <person name="Arnold W."/>
            <person name="Bahr A."/>
            <person name="Ballesta J.P.G."/>
            <person name="Bargues M."/>
            <person name="Baron L."/>
            <person name="Becker A."/>
            <person name="Biteau N."/>
            <person name="Bloecker H."/>
            <person name="Blugeon C."/>
            <person name="Boskovic J."/>
            <person name="Brandt P."/>
            <person name="Brueckner M."/>
            <person name="Buitrago M.J."/>
            <person name="Coster F."/>
            <person name="Delaveau T."/>
            <person name="del Rey F."/>
            <person name="Dujon B."/>
            <person name="Eide L.G."/>
            <person name="Garcia-Cantalejo J.M."/>
            <person name="Goffeau A."/>
            <person name="Gomez-Peris A."/>
            <person name="Granotier C."/>
            <person name="Hanemann V."/>
            <person name="Hankeln T."/>
            <person name="Hoheisel J.D."/>
            <person name="Jaeger W."/>
            <person name="Jimenez A."/>
            <person name="Jonniaux J.-L."/>
            <person name="Kraemer C."/>
            <person name="Kuester H."/>
            <person name="Laamanen P."/>
            <person name="Legros Y."/>
            <person name="Louis E.J."/>
            <person name="Moeller-Rieker S."/>
            <person name="Monnet A."/>
            <person name="Moro M."/>
            <person name="Mueller-Auer S."/>
            <person name="Nussbaumer B."/>
            <person name="Paricio N."/>
            <person name="Paulin L."/>
            <person name="Perea J."/>
            <person name="Perez-Alonso M."/>
            <person name="Perez-Ortin J.E."/>
            <person name="Pohl T.M."/>
            <person name="Prydz H."/>
            <person name="Purnelle B."/>
            <person name="Rasmussen S.W."/>
            <person name="Remacha M.A."/>
            <person name="Revuelta J.L."/>
            <person name="Rieger M."/>
            <person name="Salom D."/>
            <person name="Saluz H.P."/>
            <person name="Saiz J.E."/>
            <person name="Saren A.-M."/>
            <person name="Schaefer M."/>
            <person name="Scharfe M."/>
            <person name="Schmidt E.R."/>
            <person name="Schneider C."/>
            <person name="Scholler P."/>
            <person name="Schwarz S."/>
            <person name="Soler-Mira A."/>
            <person name="Urrestarazu L.A."/>
            <person name="Verhasselt P."/>
            <person name="Vissers S."/>
            <person name="Voet M."/>
            <person name="Volckaert G."/>
            <person name="Wagner G."/>
            <person name="Wambutt R."/>
            <person name="Wedler E."/>
            <person name="Wedler H."/>
            <person name="Woelfl S."/>
            <person name="Harris D.E."/>
            <person name="Bowman S."/>
            <person name="Brown D."/>
            <person name="Churcher C.M."/>
            <person name="Connor R."/>
            <person name="Dedman K."/>
            <person name="Gentles S."/>
            <person name="Hamlin N."/>
            <person name="Hunt S."/>
            <person name="Jones L."/>
            <person name="McDonald S."/>
            <person name="Murphy L.D."/>
            <person name="Niblett D."/>
            <person name="Odell C."/>
            <person name="Oliver K."/>
            <person name="Rajandream M.A."/>
            <person name="Richards C."/>
            <person name="Shore L."/>
            <person name="Walsh S.V."/>
            <person name="Barrell B.G."/>
            <person name="Dietrich F.S."/>
            <person name="Mulligan J.T."/>
            <person name="Allen E."/>
            <person name="Araujo R."/>
            <person name="Aviles E."/>
            <person name="Berno A."/>
            <person name="Carpenter J."/>
            <person name="Chen E."/>
            <person name="Cherry J.M."/>
            <person name="Chung E."/>
            <person name="Duncan M."/>
            <person name="Hunicke-Smith S."/>
            <person name="Hyman R.W."/>
            <person name="Komp C."/>
            <person name="Lashkari D."/>
            <person name="Lew H."/>
            <person name="Lin D."/>
            <person name="Mosedale D."/>
            <person name="Nakahara K."/>
            <person name="Namath A."/>
            <person name="Oefner P."/>
            <person name="Oh C."/>
            <person name="Petel F.X."/>
            <person name="Roberts D."/>
            <person name="Schramm S."/>
            <person name="Schroeder M."/>
            <person name="Shogren T."/>
            <person name="Shroff N."/>
            <person name="Winant A."/>
            <person name="Yelton M.A."/>
            <person name="Botstein D."/>
            <person name="Davis R.W."/>
            <person name="Johnston M."/>
            <person name="Andrews S."/>
            <person name="Brinkman R."/>
            <person name="Cooper J."/>
            <person name="Ding H."/>
            <person name="Du Z."/>
            <person name="Favello A."/>
            <person name="Fulton L."/>
            <person name="Gattung S."/>
            <person name="Greco T."/>
            <person name="Hallsworth K."/>
            <person name="Hawkins J."/>
            <person name="Hillier L.W."/>
            <person name="Jier M."/>
            <person name="Johnson D."/>
            <person name="Johnston L."/>
            <person name="Kirsten J."/>
            <person name="Kucaba T."/>
            <person name="Langston Y."/>
            <person name="Latreille P."/>
            <person name="Le T."/>
            <person name="Mardis E."/>
            <person name="Menezes S."/>
            <person name="Miller N."/>
            <person name="Nhan M."/>
            <person name="Pauley A."/>
            <person name="Peluso D."/>
            <person name="Rifkin L."/>
            <person name="Riles L."/>
            <person name="Taich A."/>
            <person name="Trevaskis E."/>
            <person name="Vignati D."/>
            <person name="Wilcox L."/>
            <person name="Wohldman P."/>
            <person name="Vaudin M."/>
            <person name="Wilson R."/>
            <person name="Waterston R."/>
            <person name="Albermann K."/>
            <person name="Hani J."/>
            <person name="Heumann K."/>
            <person name="Kleine K."/>
            <person name="Mewes H.-W."/>
            <person name="Zollner A."/>
            <person name="Zaccaria P."/>
        </authorList>
    </citation>
    <scope>NUCLEOTIDE SEQUENCE [LARGE SCALE GENOMIC DNA]</scope>
    <source>
        <strain>ATCC 204508 / S288c</strain>
    </source>
</reference>
<reference key="3">
    <citation type="journal article" date="2014" name="G3 (Bethesda)">
        <title>The reference genome sequence of Saccharomyces cerevisiae: Then and now.</title>
        <authorList>
            <person name="Engel S.R."/>
            <person name="Dietrich F.S."/>
            <person name="Fisk D.G."/>
            <person name="Binkley G."/>
            <person name="Balakrishnan R."/>
            <person name="Costanzo M.C."/>
            <person name="Dwight S.S."/>
            <person name="Hitz B.C."/>
            <person name="Karra K."/>
            <person name="Nash R.S."/>
            <person name="Weng S."/>
            <person name="Wong E.D."/>
            <person name="Lloyd P."/>
            <person name="Skrzypek M.S."/>
            <person name="Miyasato S.R."/>
            <person name="Simison M."/>
            <person name="Cherry J.M."/>
        </authorList>
    </citation>
    <scope>GENOME REANNOTATION</scope>
    <source>
        <strain>ATCC 204508 / S288c</strain>
    </source>
</reference>
<reference key="4">
    <citation type="journal article" date="1998" name="Genome Res.">
        <title>Transposable elements and genome organization: a comprehensive survey of retrotransposons revealed by the complete Saccharomyces cerevisiae genome sequence.</title>
        <authorList>
            <person name="Kim J.M."/>
            <person name="Vanguri S."/>
            <person name="Boeke J.D."/>
            <person name="Gabriel A."/>
            <person name="Voytas D.F."/>
        </authorList>
    </citation>
    <scope>NOMENCLATURE</scope>
</reference>
<reference key="5">
    <citation type="journal article" date="2005" name="Cytogenet. Genome Res.">
        <title>Happy together: the life and times of Ty retrotransposons and their hosts.</title>
        <authorList>
            <person name="Lesage P."/>
            <person name="Todeschini A.L."/>
        </authorList>
    </citation>
    <scope>REVIEW</scope>
</reference>
<reference key="6">
    <citation type="journal article" date="2005" name="Cytogenet. Genome Res.">
        <title>Reverse transcriptase and integrase of the Saccharomyces cerevisiae Ty1 element.</title>
        <authorList>
            <person name="Wilhelm F.-X."/>
            <person name="Wilhelm M."/>
            <person name="Gabriel A."/>
        </authorList>
    </citation>
    <scope>REVIEW</scope>
    <scope>DOMAINS</scope>
</reference>
<comment type="function">
    <text evidence="1">Capsid protein (CA) is the structural component of the virus-like particle (VLP), forming the shell that encapsulates the retrotransposons dimeric RNA genome. The particles are assembled from trimer-clustered units and there are holes in the capsid shells that allow for the diffusion of macromolecules. CA also has nucleocapsid-like chaperone activity, promoting primer tRNA(i)-Met annealing to the multipartite primer-binding site (PBS), dimerization of Ty1 RNA and initiation of reverse transcription (By similarity).</text>
</comment>
<comment type="function">
    <text evidence="1">The aspartyl protease (PR) mediates the proteolytic cleavages of the Gag and Gag-Pol polyproteins after assembly of the VLP.</text>
</comment>
<comment type="function">
    <text evidence="1">Reverse transcriptase/ribonuclease H (RT) is a multifunctional enzyme that catalyzes the conversion of the retro-elements RNA genome into dsDNA within the VLP. The enzyme displays a DNA polymerase activity that can copy either DNA or RNA templates, and a ribonuclease H (RNase H) activity that cleaves the RNA strand of RNA-DNA heteroduplexes during plus-strand synthesis and hydrolyzes RNA primers. The conversion leads to a linear dsDNA copy of the retrotransposon that includes long terminal repeats (LTRs) at both ends (By similarity).</text>
</comment>
<comment type="function">
    <text evidence="1">Integrase (IN) targets the VLP to the nucleus, where a subparticle preintegration complex (PIC) containing at least integrase and the newly synthesized dsDNA copy of the retrotransposon must transit the nuclear membrane. Once in the nucleus, integrase performs the integration of the dsDNA into the host genome (By similarity).</text>
</comment>
<comment type="catalytic activity">
    <reaction>
        <text>DNA(n) + a 2'-deoxyribonucleoside 5'-triphosphate = DNA(n+1) + diphosphate</text>
        <dbReference type="Rhea" id="RHEA:22508"/>
        <dbReference type="Rhea" id="RHEA-COMP:17339"/>
        <dbReference type="Rhea" id="RHEA-COMP:17340"/>
        <dbReference type="ChEBI" id="CHEBI:33019"/>
        <dbReference type="ChEBI" id="CHEBI:61560"/>
        <dbReference type="ChEBI" id="CHEBI:173112"/>
        <dbReference type="EC" id="2.7.7.49"/>
    </reaction>
</comment>
<comment type="catalytic activity">
    <reaction>
        <text>DNA(n) + a 2'-deoxyribonucleoside 5'-triphosphate = DNA(n+1) + diphosphate</text>
        <dbReference type="Rhea" id="RHEA:22508"/>
        <dbReference type="Rhea" id="RHEA-COMP:17339"/>
        <dbReference type="Rhea" id="RHEA-COMP:17340"/>
        <dbReference type="ChEBI" id="CHEBI:33019"/>
        <dbReference type="ChEBI" id="CHEBI:61560"/>
        <dbReference type="ChEBI" id="CHEBI:173112"/>
        <dbReference type="EC" id="2.7.7.7"/>
    </reaction>
</comment>
<comment type="catalytic activity">
    <reaction>
        <text>Endonucleolytic cleavage to 5'-phosphomonoester.</text>
        <dbReference type="EC" id="3.1.26.4"/>
    </reaction>
</comment>
<comment type="subunit">
    <text evidence="1">The capsid protein forms a homotrimer, from which the VLPs are assembled. The protease is a homodimer, whose active site consists of two apposed aspartic acid residues (By similarity).</text>
</comment>
<comment type="subcellular location">
    <subcellularLocation>
        <location>Cytoplasm</location>
    </subcellularLocation>
    <subcellularLocation>
        <location evidence="1">Nucleus</location>
    </subcellularLocation>
</comment>
<comment type="alternative products">
    <event type="ribosomal frameshifting"/>
    <isoform>
        <id>Q03855-1</id>
        <name>Transposon Ty1-DR1 Gag-Pol polyprotein</name>
        <sequence type="displayed"/>
    </isoform>
    <isoform>
        <id>Q03856-1</id>
        <name>Transposon Ty1-DR1 Gag polyprotein</name>
        <sequence type="external"/>
    </isoform>
    <text evidence="1">The Gag-Pol polyprotein is generated by a +1 ribosomal frameshift. The ratio of Gag:Gag-Pol varies between 20:1 and 5:1 (By similarity).</text>
</comment>
<comment type="domain">
    <text evidence="1">The C-terminal RNA-binding region of CA is sufficient for all its nucleocapsid-like chaperone activities.</text>
</comment>
<comment type="domain">
    <text evidence="1">Integrase core domain contains the D-x(n)-D-x(35)-E motif, named for the phylogenetically conserved glutamic acid and aspartic acid residues and the invariant 35 amino acid spacing between the second and third acidic residues. Each acidic residue of the D,D(35)E motif is independently essential for the 3'-processing and strand transfer activities of purified integrase protein (By similarity).</text>
</comment>
<comment type="PTM">
    <text evidence="1">Initially, virus-like particles (VLPs) are composed of the structural unprocessed proteins Gag and Gag-Pol, and also contain the host initiator methionine tRNA (tRNA(i)-Met) which serves as a primer for minus-strand DNA synthesis, and a dimer of genomic Ty RNA. Processing of the polyproteins occurs within the particle and proceeds by an ordered pathway, called maturation. First, the protease (PR) is released by autocatalytic cleavage of the Gag-Pol polyprotein yielding capsid protein p45 and a Pol-p154 precursor protein. This cleavage is a prerequisite for subsequent processing of Pol-p154 at the remaining sites to release the mature structural and catalytic proteins. Maturation takes place prior to the RT reaction and is required to produce transposition-competent VLPs (By similarity).</text>
</comment>
<comment type="miscellaneous">
    <text>Retrotransposons are mobile genetic entities that are able to replicate via an RNA intermediate and a reverse transcription step. In contrast to retroviruses, retrotransposons are non-infectious, lack an envelope and remain intracellular. Ty1 retrotransposons belong to the copia elements (pseudoviridae).</text>
</comment>
<comment type="miscellaneous">
    <molecule>Isoform Transposon Ty1-DR1 Gag-Pol polyprotein</molecule>
    <text>Produced by +1 ribosomal frameshifting between codon Leu-435 and Gly-436 of the YDR098C-A ORF.</text>
</comment>
<comment type="sequence caution" evidence="6">
    <conflict type="erroneous gene model prediction">
        <sequence resource="EMBL-CDS" id="CAA87673"/>
    </conflict>
</comment>
<comment type="sequence caution" evidence="6">
    <conflict type="erroneous gene model prediction" ref="1"/>
</comment>
<accession>Q03855</accession>
<accession>D6VS84</accession>
<keyword id="KW-0064">Aspartyl protease</keyword>
<keyword id="KW-0067">ATP-binding</keyword>
<keyword id="KW-0963">Cytoplasm</keyword>
<keyword id="KW-0229">DNA integration</keyword>
<keyword id="KW-0233">DNA recombination</keyword>
<keyword id="KW-0238">DNA-binding</keyword>
<keyword id="KW-0239">DNA-directed DNA polymerase</keyword>
<keyword id="KW-0255">Endonuclease</keyword>
<keyword id="KW-0378">Hydrolase</keyword>
<keyword id="KW-0460">Magnesium</keyword>
<keyword id="KW-0479">Metal-binding</keyword>
<keyword id="KW-0511">Multifunctional enzyme</keyword>
<keyword id="KW-0540">Nuclease</keyword>
<keyword id="KW-0547">Nucleotide-binding</keyword>
<keyword id="KW-0548">Nucleotidyltransferase</keyword>
<keyword id="KW-0539">Nucleus</keyword>
<keyword id="KW-0597">Phosphoprotein</keyword>
<keyword id="KW-0645">Protease</keyword>
<keyword id="KW-1185">Reference proteome</keyword>
<keyword id="KW-0688">Ribosomal frameshifting</keyword>
<keyword id="KW-0694">RNA-binding</keyword>
<keyword id="KW-0695">RNA-directed DNA polymerase</keyword>
<keyword id="KW-0808">Transferase</keyword>
<keyword id="KW-0814">Transposable element</keyword>
<keyword id="KW-0815">Transposition</keyword>
<keyword id="KW-1188">Viral release from host cell</keyword>
<keyword id="KW-0917">Virion maturation</keyword>
<keyword id="KW-0862">Zinc</keyword>
<keyword id="KW-0863">Zinc-finger</keyword>
<organism>
    <name type="scientific">Saccharomyces cerevisiae (strain ATCC 204508 / S288c)</name>
    <name type="common">Baker's yeast</name>
    <dbReference type="NCBI Taxonomy" id="559292"/>
    <lineage>
        <taxon>Eukaryota</taxon>
        <taxon>Fungi</taxon>
        <taxon>Dikarya</taxon>
        <taxon>Ascomycota</taxon>
        <taxon>Saccharomycotina</taxon>
        <taxon>Saccharomycetes</taxon>
        <taxon>Saccharomycetales</taxon>
        <taxon>Saccharomycetaceae</taxon>
        <taxon>Saccharomyces</taxon>
    </lineage>
</organism>